<gene>
    <name type="primary">yhjN</name>
    <name type="ordered locus">BSU10570</name>
</gene>
<keyword id="KW-1003">Cell membrane</keyword>
<keyword id="KW-0472">Membrane</keyword>
<keyword id="KW-1185">Reference proteome</keyword>
<keyword id="KW-0812">Transmembrane</keyword>
<keyword id="KW-1133">Transmembrane helix</keyword>
<accession>O07568</accession>
<accession>Q796R8</accession>
<reference key="1">
    <citation type="journal article" date="1998" name="Microbiology">
        <title>The 172 kb prkA-addAB region from 83 degrees to 97 degrees of the Bacillus subtilis chromosome contains several dysfunctional genes, the glyB marker, many genes encoding transporter proteins, and the ubiquitous hit gene.</title>
        <authorList>
            <person name="Noback M.A."/>
            <person name="Holsappel S."/>
            <person name="Kiewiet R."/>
            <person name="Terpstra P."/>
            <person name="Wambutt R."/>
            <person name="Wedler H."/>
            <person name="Venema G."/>
            <person name="Bron S."/>
        </authorList>
    </citation>
    <scope>NUCLEOTIDE SEQUENCE [GENOMIC DNA]</scope>
    <source>
        <strain>168</strain>
    </source>
</reference>
<reference key="2">
    <citation type="journal article" date="1997" name="Nature">
        <title>The complete genome sequence of the Gram-positive bacterium Bacillus subtilis.</title>
        <authorList>
            <person name="Kunst F."/>
            <person name="Ogasawara N."/>
            <person name="Moszer I."/>
            <person name="Albertini A.M."/>
            <person name="Alloni G."/>
            <person name="Azevedo V."/>
            <person name="Bertero M.G."/>
            <person name="Bessieres P."/>
            <person name="Bolotin A."/>
            <person name="Borchert S."/>
            <person name="Borriss R."/>
            <person name="Boursier L."/>
            <person name="Brans A."/>
            <person name="Braun M."/>
            <person name="Brignell S.C."/>
            <person name="Bron S."/>
            <person name="Brouillet S."/>
            <person name="Bruschi C.V."/>
            <person name="Caldwell B."/>
            <person name="Capuano V."/>
            <person name="Carter N.M."/>
            <person name="Choi S.-K."/>
            <person name="Codani J.-J."/>
            <person name="Connerton I.F."/>
            <person name="Cummings N.J."/>
            <person name="Daniel R.A."/>
            <person name="Denizot F."/>
            <person name="Devine K.M."/>
            <person name="Duesterhoeft A."/>
            <person name="Ehrlich S.D."/>
            <person name="Emmerson P.T."/>
            <person name="Entian K.-D."/>
            <person name="Errington J."/>
            <person name="Fabret C."/>
            <person name="Ferrari E."/>
            <person name="Foulger D."/>
            <person name="Fritz C."/>
            <person name="Fujita M."/>
            <person name="Fujita Y."/>
            <person name="Fuma S."/>
            <person name="Galizzi A."/>
            <person name="Galleron N."/>
            <person name="Ghim S.-Y."/>
            <person name="Glaser P."/>
            <person name="Goffeau A."/>
            <person name="Golightly E.J."/>
            <person name="Grandi G."/>
            <person name="Guiseppi G."/>
            <person name="Guy B.J."/>
            <person name="Haga K."/>
            <person name="Haiech J."/>
            <person name="Harwood C.R."/>
            <person name="Henaut A."/>
            <person name="Hilbert H."/>
            <person name="Holsappel S."/>
            <person name="Hosono S."/>
            <person name="Hullo M.-F."/>
            <person name="Itaya M."/>
            <person name="Jones L.-M."/>
            <person name="Joris B."/>
            <person name="Karamata D."/>
            <person name="Kasahara Y."/>
            <person name="Klaerr-Blanchard M."/>
            <person name="Klein C."/>
            <person name="Kobayashi Y."/>
            <person name="Koetter P."/>
            <person name="Koningstein G."/>
            <person name="Krogh S."/>
            <person name="Kumano M."/>
            <person name="Kurita K."/>
            <person name="Lapidus A."/>
            <person name="Lardinois S."/>
            <person name="Lauber J."/>
            <person name="Lazarevic V."/>
            <person name="Lee S.-M."/>
            <person name="Levine A."/>
            <person name="Liu H."/>
            <person name="Masuda S."/>
            <person name="Mauel C."/>
            <person name="Medigue C."/>
            <person name="Medina N."/>
            <person name="Mellado R.P."/>
            <person name="Mizuno M."/>
            <person name="Moestl D."/>
            <person name="Nakai S."/>
            <person name="Noback M."/>
            <person name="Noone D."/>
            <person name="O'Reilly M."/>
            <person name="Ogawa K."/>
            <person name="Ogiwara A."/>
            <person name="Oudega B."/>
            <person name="Park S.-H."/>
            <person name="Parro V."/>
            <person name="Pohl T.M."/>
            <person name="Portetelle D."/>
            <person name="Porwollik S."/>
            <person name="Prescott A.M."/>
            <person name="Presecan E."/>
            <person name="Pujic P."/>
            <person name="Purnelle B."/>
            <person name="Rapoport G."/>
            <person name="Rey M."/>
            <person name="Reynolds S."/>
            <person name="Rieger M."/>
            <person name="Rivolta C."/>
            <person name="Rocha E."/>
            <person name="Roche B."/>
            <person name="Rose M."/>
            <person name="Sadaie Y."/>
            <person name="Sato T."/>
            <person name="Scanlan E."/>
            <person name="Schleich S."/>
            <person name="Schroeter R."/>
            <person name="Scoffone F."/>
            <person name="Sekiguchi J."/>
            <person name="Sekowska A."/>
            <person name="Seror S.J."/>
            <person name="Serror P."/>
            <person name="Shin B.-S."/>
            <person name="Soldo B."/>
            <person name="Sorokin A."/>
            <person name="Tacconi E."/>
            <person name="Takagi T."/>
            <person name="Takahashi H."/>
            <person name="Takemaru K."/>
            <person name="Takeuchi M."/>
            <person name="Tamakoshi A."/>
            <person name="Tanaka T."/>
            <person name="Terpstra P."/>
            <person name="Tognoni A."/>
            <person name="Tosato V."/>
            <person name="Uchiyama S."/>
            <person name="Vandenbol M."/>
            <person name="Vannier F."/>
            <person name="Vassarotti A."/>
            <person name="Viari A."/>
            <person name="Wambutt R."/>
            <person name="Wedler E."/>
            <person name="Wedler H."/>
            <person name="Weitzenegger T."/>
            <person name="Winters P."/>
            <person name="Wipat A."/>
            <person name="Yamamoto H."/>
            <person name="Yamane K."/>
            <person name="Yasumoto K."/>
            <person name="Yata K."/>
            <person name="Yoshida K."/>
            <person name="Yoshikawa H.-F."/>
            <person name="Zumstein E."/>
            <person name="Yoshikawa H."/>
            <person name="Danchin A."/>
        </authorList>
    </citation>
    <scope>NUCLEOTIDE SEQUENCE [LARGE SCALE GENOMIC DNA]</scope>
    <source>
        <strain>168</strain>
    </source>
</reference>
<comment type="subcellular location">
    <subcellularLocation>
        <location evidence="2">Cell membrane</location>
        <topology evidence="2">Multi-pass membrane protein</topology>
    </subcellularLocation>
</comment>
<comment type="similarity">
    <text evidence="2">Belongs to the AbrB family.</text>
</comment>
<organism>
    <name type="scientific">Bacillus subtilis (strain 168)</name>
    <dbReference type="NCBI Taxonomy" id="224308"/>
    <lineage>
        <taxon>Bacteria</taxon>
        <taxon>Bacillati</taxon>
        <taxon>Bacillota</taxon>
        <taxon>Bacilli</taxon>
        <taxon>Bacillales</taxon>
        <taxon>Bacillaceae</taxon>
        <taxon>Bacillus</taxon>
    </lineage>
</organism>
<feature type="chain" id="PRO_0000360788" description="Uncharacterized protein YhjN">
    <location>
        <begin position="1"/>
        <end position="384"/>
    </location>
</feature>
<feature type="transmembrane region" description="Helical" evidence="1">
    <location>
        <begin position="11"/>
        <end position="31"/>
    </location>
</feature>
<feature type="transmembrane region" description="Helical" evidence="1">
    <location>
        <begin position="33"/>
        <end position="53"/>
    </location>
</feature>
<feature type="transmembrane region" description="Helical" evidence="1">
    <location>
        <begin position="66"/>
        <end position="86"/>
    </location>
</feature>
<feature type="transmembrane region" description="Helical" evidence="1">
    <location>
        <begin position="94"/>
        <end position="114"/>
    </location>
</feature>
<feature type="transmembrane region" description="Helical" evidence="1">
    <location>
        <begin position="153"/>
        <end position="173"/>
    </location>
</feature>
<feature type="transmembrane region" description="Helical" evidence="1">
    <location>
        <begin position="197"/>
        <end position="217"/>
    </location>
</feature>
<feature type="transmembrane region" description="Helical" evidence="1">
    <location>
        <begin position="224"/>
        <end position="244"/>
    </location>
</feature>
<feature type="transmembrane region" description="Helical" evidence="1">
    <location>
        <begin position="284"/>
        <end position="304"/>
    </location>
</feature>
<feature type="transmembrane region" description="Helical" evidence="1">
    <location>
        <begin position="309"/>
        <end position="329"/>
    </location>
</feature>
<feature type="transmembrane region" description="Helical" evidence="1">
    <location>
        <begin position="342"/>
        <end position="362"/>
    </location>
</feature>
<evidence type="ECO:0000255" key="1"/>
<evidence type="ECO:0000305" key="2"/>
<name>YHJN_BACSU</name>
<dbReference type="EMBL" id="Y14081">
    <property type="protein sequence ID" value="CAA74476.1"/>
    <property type="molecule type" value="Genomic_DNA"/>
</dbReference>
<dbReference type="EMBL" id="AL009126">
    <property type="protein sequence ID" value="CAB12897.1"/>
    <property type="molecule type" value="Genomic_DNA"/>
</dbReference>
<dbReference type="PIR" id="E69834">
    <property type="entry name" value="E69834"/>
</dbReference>
<dbReference type="RefSeq" id="NP_388938.1">
    <property type="nucleotide sequence ID" value="NC_000964.3"/>
</dbReference>
<dbReference type="RefSeq" id="WP_003245459.1">
    <property type="nucleotide sequence ID" value="NZ_OZ025638.1"/>
</dbReference>
<dbReference type="FunCoup" id="O07568">
    <property type="interactions" value="34"/>
</dbReference>
<dbReference type="IntAct" id="O07568">
    <property type="interactions" value="2"/>
</dbReference>
<dbReference type="STRING" id="224308.BSU10570"/>
<dbReference type="PaxDb" id="224308-BSU10570"/>
<dbReference type="EnsemblBacteria" id="CAB12897">
    <property type="protein sequence ID" value="CAB12897"/>
    <property type="gene ID" value="BSU_10570"/>
</dbReference>
<dbReference type="GeneID" id="939324"/>
<dbReference type="KEGG" id="bsu:BSU10570"/>
<dbReference type="PATRIC" id="fig|224308.179.peg.1136"/>
<dbReference type="eggNOG" id="COG3180">
    <property type="taxonomic scope" value="Bacteria"/>
</dbReference>
<dbReference type="InParanoid" id="O07568"/>
<dbReference type="OrthoDB" id="5460360at2"/>
<dbReference type="BioCyc" id="BSUB:BSU10570-MONOMER"/>
<dbReference type="Proteomes" id="UP000001570">
    <property type="component" value="Chromosome"/>
</dbReference>
<dbReference type="GO" id="GO:0005886">
    <property type="term" value="C:plasma membrane"/>
    <property type="evidence" value="ECO:0000318"/>
    <property type="project" value="GO_Central"/>
</dbReference>
<dbReference type="GO" id="GO:0010468">
    <property type="term" value="P:regulation of gene expression"/>
    <property type="evidence" value="ECO:0007669"/>
    <property type="project" value="InterPro"/>
</dbReference>
<dbReference type="InterPro" id="IPR017516">
    <property type="entry name" value="AbrB_dup"/>
</dbReference>
<dbReference type="InterPro" id="IPR007820">
    <property type="entry name" value="AbrB_fam"/>
</dbReference>
<dbReference type="NCBIfam" id="TIGR03082">
    <property type="entry name" value="Gneg_AbrB_dup"/>
    <property type="match status" value="2"/>
</dbReference>
<dbReference type="PANTHER" id="PTHR38457">
    <property type="entry name" value="REGULATOR ABRB-RELATED"/>
    <property type="match status" value="1"/>
</dbReference>
<dbReference type="PANTHER" id="PTHR38457:SF1">
    <property type="entry name" value="REGULATOR ABRB-RELATED"/>
    <property type="match status" value="1"/>
</dbReference>
<dbReference type="Pfam" id="PF05145">
    <property type="entry name" value="AbrB"/>
    <property type="match status" value="1"/>
</dbReference>
<dbReference type="PIRSF" id="PIRSF038991">
    <property type="entry name" value="Protein_AbrB"/>
    <property type="match status" value="1"/>
</dbReference>
<protein>
    <recommendedName>
        <fullName>Uncharacterized protein YhjN</fullName>
    </recommendedName>
</protein>
<proteinExistence type="inferred from homology"/>
<sequence>MKKDENLLKDLWFIAISAAGGFILSLTGISIGWMIGTLIVACCLAMIRPAWLMMAPDQKGINRRWLALGQMILGIELGQKLNLSVLSVLKDHWFSVGVMLILSILLAMLSGYVLWRFSKTDMMTSFVGTAPGGLSAMPSIAQEVGANTAIVSLVQMMRVLLVVLSIPFLVILIYTKQDRTASAAAETISSATTDFRLAPVLWTVILILAAWGACKAAKFLKFPAPWLLGSMLGVAIVHVGGAAVTGHDMTAWWLSQANHVSQVFLGATIGSKMYKSMFAGVTRIIIVGFVSSVGLIAAMFLSAVIVSELTGISLITSVLAFAPGGIAEMATTSVTLHADSTFVVAVQVIRVILVIALLPPFYRLLHHLHGEKKDKKSSISGSSA</sequence>